<name>RK36_CYAM1</name>
<accession>Q85FU5</accession>
<gene>
    <name evidence="1" type="primary">rpl36</name>
</gene>
<comment type="subcellular location">
    <subcellularLocation>
        <location>Plastid</location>
        <location>Chloroplast</location>
    </subcellularLocation>
</comment>
<comment type="similarity">
    <text evidence="1">Belongs to the bacterial ribosomal protein bL36 family.</text>
</comment>
<feature type="chain" id="PRO_0000126318" description="Large ribosomal subunit protein bL36c">
    <location>
        <begin position="1"/>
        <end position="37"/>
    </location>
</feature>
<evidence type="ECO:0000255" key="1">
    <source>
        <dbReference type="HAMAP-Rule" id="MF_00251"/>
    </source>
</evidence>
<evidence type="ECO:0000305" key="2"/>
<organism>
    <name type="scientific">Cyanidioschyzon merolae (strain NIES-3377 / 10D)</name>
    <name type="common">Unicellular red alga</name>
    <dbReference type="NCBI Taxonomy" id="280699"/>
    <lineage>
        <taxon>Eukaryota</taxon>
        <taxon>Rhodophyta</taxon>
        <taxon>Bangiophyceae</taxon>
        <taxon>Cyanidiales</taxon>
        <taxon>Cyanidiaceae</taxon>
        <taxon>Cyanidioschyzon</taxon>
    </lineage>
</organism>
<proteinExistence type="inferred from homology"/>
<reference key="1">
    <citation type="journal article" date="2003" name="DNA Res.">
        <title>Complete sequence and analysis of the plastid genome of the unicellular red alga Cyanidioschyzon merolae.</title>
        <authorList>
            <person name="Ohta N."/>
            <person name="Matsuzaki M."/>
            <person name="Misumi O."/>
            <person name="Miyagishima S.-Y."/>
            <person name="Nozaki H."/>
            <person name="Tanaka K."/>
            <person name="Shin-i T."/>
            <person name="Kohara Y."/>
            <person name="Kuroiwa T."/>
        </authorList>
    </citation>
    <scope>NUCLEOTIDE SEQUENCE [LARGE SCALE GENOMIC DNA]</scope>
    <source>
        <strain>NIES-3377 / 10D</strain>
    </source>
</reference>
<geneLocation type="chloroplast"/>
<protein>
    <recommendedName>
        <fullName evidence="1">Large ribosomal subunit protein bL36c</fullName>
    </recommendedName>
    <alternativeName>
        <fullName evidence="2">50S ribosomal protein L36, chloroplastic</fullName>
    </alternativeName>
</protein>
<dbReference type="EMBL" id="AB002583">
    <property type="protein sequence ID" value="BAC76249.1"/>
    <property type="molecule type" value="Genomic_DNA"/>
</dbReference>
<dbReference type="RefSeq" id="NP_849087.1">
    <property type="nucleotide sequence ID" value="NC_004799.1"/>
</dbReference>
<dbReference type="SMR" id="Q85FU5"/>
<dbReference type="STRING" id="280699.Q85FU5"/>
<dbReference type="EnsemblPlants" id="CMV182CT">
    <property type="protein sequence ID" value="CMV182CT"/>
    <property type="gene ID" value="CMV182C"/>
</dbReference>
<dbReference type="GeneID" id="844990"/>
<dbReference type="Gramene" id="CMV182CT">
    <property type="protein sequence ID" value="CMV182CT"/>
    <property type="gene ID" value="CMV182C"/>
</dbReference>
<dbReference type="KEGG" id="cme:CymeCp155"/>
<dbReference type="eggNOG" id="ENOG502SBPU">
    <property type="taxonomic scope" value="Eukaryota"/>
</dbReference>
<dbReference type="HOGENOM" id="CLU_135723_6_2_1"/>
<dbReference type="Proteomes" id="UP000007014">
    <property type="component" value="Chloroplast"/>
</dbReference>
<dbReference type="GO" id="GO:0009507">
    <property type="term" value="C:chloroplast"/>
    <property type="evidence" value="ECO:0007669"/>
    <property type="project" value="UniProtKB-SubCell"/>
</dbReference>
<dbReference type="GO" id="GO:1990904">
    <property type="term" value="C:ribonucleoprotein complex"/>
    <property type="evidence" value="ECO:0007669"/>
    <property type="project" value="UniProtKB-KW"/>
</dbReference>
<dbReference type="GO" id="GO:0005840">
    <property type="term" value="C:ribosome"/>
    <property type="evidence" value="ECO:0007669"/>
    <property type="project" value="UniProtKB-KW"/>
</dbReference>
<dbReference type="GO" id="GO:0003735">
    <property type="term" value="F:structural constituent of ribosome"/>
    <property type="evidence" value="ECO:0007669"/>
    <property type="project" value="InterPro"/>
</dbReference>
<dbReference type="GO" id="GO:0006412">
    <property type="term" value="P:translation"/>
    <property type="evidence" value="ECO:0007669"/>
    <property type="project" value="UniProtKB-UniRule"/>
</dbReference>
<dbReference type="HAMAP" id="MF_00251">
    <property type="entry name" value="Ribosomal_bL36"/>
    <property type="match status" value="1"/>
</dbReference>
<dbReference type="InterPro" id="IPR000473">
    <property type="entry name" value="Ribosomal_bL36"/>
</dbReference>
<dbReference type="InterPro" id="IPR035977">
    <property type="entry name" value="Ribosomal_bL36_sp"/>
</dbReference>
<dbReference type="NCBIfam" id="TIGR01022">
    <property type="entry name" value="rpmJ_bact"/>
    <property type="match status" value="1"/>
</dbReference>
<dbReference type="PANTHER" id="PTHR42888">
    <property type="entry name" value="50S RIBOSOMAL PROTEIN L36, CHLOROPLASTIC"/>
    <property type="match status" value="1"/>
</dbReference>
<dbReference type="PANTHER" id="PTHR42888:SF1">
    <property type="entry name" value="LARGE RIBOSOMAL SUBUNIT PROTEIN BL36C"/>
    <property type="match status" value="1"/>
</dbReference>
<dbReference type="Pfam" id="PF00444">
    <property type="entry name" value="Ribosomal_L36"/>
    <property type="match status" value="1"/>
</dbReference>
<dbReference type="SUPFAM" id="SSF57840">
    <property type="entry name" value="Ribosomal protein L36"/>
    <property type="match status" value="1"/>
</dbReference>
<keyword id="KW-0150">Chloroplast</keyword>
<keyword id="KW-0934">Plastid</keyword>
<keyword id="KW-1185">Reference proteome</keyword>
<keyword id="KW-0687">Ribonucleoprotein</keyword>
<keyword id="KW-0689">Ribosomal protein</keyword>
<sequence>MKVRSSVKKICANCQIKRRHGVLRVICSNPKHKQRQG</sequence>